<dbReference type="EMBL" id="CP000454">
    <property type="protein sequence ID" value="ABK02854.1"/>
    <property type="molecule type" value="Genomic_DNA"/>
</dbReference>
<dbReference type="RefSeq" id="WP_011691321.1">
    <property type="nucleotide sequence ID" value="NC_008541.1"/>
</dbReference>
<dbReference type="SMR" id="A0JUY4"/>
<dbReference type="STRING" id="290399.Arth_1460"/>
<dbReference type="KEGG" id="art:Arth_1460"/>
<dbReference type="eggNOG" id="COG0468">
    <property type="taxonomic scope" value="Bacteria"/>
</dbReference>
<dbReference type="HOGENOM" id="CLU_040469_3_2_11"/>
<dbReference type="OrthoDB" id="9776733at2"/>
<dbReference type="Proteomes" id="UP000000754">
    <property type="component" value="Chromosome"/>
</dbReference>
<dbReference type="GO" id="GO:0005829">
    <property type="term" value="C:cytosol"/>
    <property type="evidence" value="ECO:0007669"/>
    <property type="project" value="TreeGrafter"/>
</dbReference>
<dbReference type="GO" id="GO:0005524">
    <property type="term" value="F:ATP binding"/>
    <property type="evidence" value="ECO:0007669"/>
    <property type="project" value="UniProtKB-UniRule"/>
</dbReference>
<dbReference type="GO" id="GO:0016887">
    <property type="term" value="F:ATP hydrolysis activity"/>
    <property type="evidence" value="ECO:0007669"/>
    <property type="project" value="InterPro"/>
</dbReference>
<dbReference type="GO" id="GO:0140664">
    <property type="term" value="F:ATP-dependent DNA damage sensor activity"/>
    <property type="evidence" value="ECO:0007669"/>
    <property type="project" value="InterPro"/>
</dbReference>
<dbReference type="GO" id="GO:0003684">
    <property type="term" value="F:damaged DNA binding"/>
    <property type="evidence" value="ECO:0007669"/>
    <property type="project" value="UniProtKB-UniRule"/>
</dbReference>
<dbReference type="GO" id="GO:0003697">
    <property type="term" value="F:single-stranded DNA binding"/>
    <property type="evidence" value="ECO:0007669"/>
    <property type="project" value="UniProtKB-UniRule"/>
</dbReference>
<dbReference type="GO" id="GO:0006310">
    <property type="term" value="P:DNA recombination"/>
    <property type="evidence" value="ECO:0007669"/>
    <property type="project" value="UniProtKB-UniRule"/>
</dbReference>
<dbReference type="GO" id="GO:0006281">
    <property type="term" value="P:DNA repair"/>
    <property type="evidence" value="ECO:0007669"/>
    <property type="project" value="UniProtKB-UniRule"/>
</dbReference>
<dbReference type="GO" id="GO:0009432">
    <property type="term" value="P:SOS response"/>
    <property type="evidence" value="ECO:0007669"/>
    <property type="project" value="UniProtKB-UniRule"/>
</dbReference>
<dbReference type="CDD" id="cd00983">
    <property type="entry name" value="RecA"/>
    <property type="match status" value="1"/>
</dbReference>
<dbReference type="FunFam" id="3.40.50.300:FF:000087">
    <property type="entry name" value="Recombinase RecA"/>
    <property type="match status" value="1"/>
</dbReference>
<dbReference type="Gene3D" id="3.40.50.300">
    <property type="entry name" value="P-loop containing nucleotide triphosphate hydrolases"/>
    <property type="match status" value="1"/>
</dbReference>
<dbReference type="HAMAP" id="MF_00268">
    <property type="entry name" value="RecA"/>
    <property type="match status" value="1"/>
</dbReference>
<dbReference type="InterPro" id="IPR003593">
    <property type="entry name" value="AAA+_ATPase"/>
</dbReference>
<dbReference type="InterPro" id="IPR013765">
    <property type="entry name" value="DNA_recomb/repair_RecA"/>
</dbReference>
<dbReference type="InterPro" id="IPR020584">
    <property type="entry name" value="DNA_recomb/repair_RecA_CS"/>
</dbReference>
<dbReference type="InterPro" id="IPR027417">
    <property type="entry name" value="P-loop_NTPase"/>
</dbReference>
<dbReference type="InterPro" id="IPR049261">
    <property type="entry name" value="RecA-like_C"/>
</dbReference>
<dbReference type="InterPro" id="IPR049428">
    <property type="entry name" value="RecA-like_N"/>
</dbReference>
<dbReference type="InterPro" id="IPR020588">
    <property type="entry name" value="RecA_ATP-bd"/>
</dbReference>
<dbReference type="InterPro" id="IPR023400">
    <property type="entry name" value="RecA_C_sf"/>
</dbReference>
<dbReference type="InterPro" id="IPR020587">
    <property type="entry name" value="RecA_monomer-monomer_interface"/>
</dbReference>
<dbReference type="NCBIfam" id="TIGR02012">
    <property type="entry name" value="tigrfam_recA"/>
    <property type="match status" value="1"/>
</dbReference>
<dbReference type="PANTHER" id="PTHR45900:SF1">
    <property type="entry name" value="MITOCHONDRIAL DNA REPAIR PROTEIN RECA HOMOLOG-RELATED"/>
    <property type="match status" value="1"/>
</dbReference>
<dbReference type="PANTHER" id="PTHR45900">
    <property type="entry name" value="RECA"/>
    <property type="match status" value="1"/>
</dbReference>
<dbReference type="Pfam" id="PF00154">
    <property type="entry name" value="RecA"/>
    <property type="match status" value="1"/>
</dbReference>
<dbReference type="Pfam" id="PF21096">
    <property type="entry name" value="RecA_C"/>
    <property type="match status" value="1"/>
</dbReference>
<dbReference type="PRINTS" id="PR00142">
    <property type="entry name" value="RECA"/>
</dbReference>
<dbReference type="SMART" id="SM00382">
    <property type="entry name" value="AAA"/>
    <property type="match status" value="1"/>
</dbReference>
<dbReference type="SUPFAM" id="SSF52540">
    <property type="entry name" value="P-loop containing nucleoside triphosphate hydrolases"/>
    <property type="match status" value="1"/>
</dbReference>
<dbReference type="SUPFAM" id="SSF54752">
    <property type="entry name" value="RecA protein, C-terminal domain"/>
    <property type="match status" value="1"/>
</dbReference>
<dbReference type="PROSITE" id="PS00321">
    <property type="entry name" value="RECA_1"/>
    <property type="match status" value="1"/>
</dbReference>
<dbReference type="PROSITE" id="PS50162">
    <property type="entry name" value="RECA_2"/>
    <property type="match status" value="1"/>
</dbReference>
<dbReference type="PROSITE" id="PS50163">
    <property type="entry name" value="RECA_3"/>
    <property type="match status" value="1"/>
</dbReference>
<protein>
    <recommendedName>
        <fullName evidence="1">Protein RecA</fullName>
    </recommendedName>
    <alternativeName>
        <fullName evidence="1">Recombinase A</fullName>
    </alternativeName>
</protein>
<comment type="function">
    <text evidence="1">Can catalyze the hydrolysis of ATP in the presence of single-stranded DNA, the ATP-dependent uptake of single-stranded DNA by duplex DNA, and the ATP-dependent hybridization of homologous single-stranded DNAs. It interacts with LexA causing its activation and leading to its autocatalytic cleavage.</text>
</comment>
<comment type="subcellular location">
    <subcellularLocation>
        <location evidence="1">Cytoplasm</location>
    </subcellularLocation>
</comment>
<comment type="similarity">
    <text evidence="1">Belongs to the RecA family.</text>
</comment>
<feature type="chain" id="PRO_1000047886" description="Protein RecA">
    <location>
        <begin position="1"/>
        <end position="351"/>
    </location>
</feature>
<feature type="binding site" evidence="1">
    <location>
        <begin position="67"/>
        <end position="74"/>
    </location>
    <ligand>
        <name>ATP</name>
        <dbReference type="ChEBI" id="CHEBI:30616"/>
    </ligand>
</feature>
<sequence length="351" mass="37476">MAAAPDRQKALDAALAQIDKQFGKGSVMRLGDEVRAPIEVIPTGSIALDVALGIGGLPRGRVVEIYGPESSGKTTVALHAVANAQRQGGIAAFIDAEHALDPEYAAKLGVDTDALLVSQPDTGEQALEIMDMLIGSGSLDVIVIDSVAALVPRAEIEGDMGDSHVGLQARLMSQALRKITGRLSQTKTTAIFINQLREKIGVFFGSPETTTGGKALKFYASIRIDVRRIQTLKEGADSVGNRTKAKIVKNKMAPPFKIAEFDIIYGQGISREGGIIDMGVEHGLIKKSGSWFTYDGDQLGQGMENSRRFLRDNPELAAELERLIKEKLGVGVKPAEAEKEASPKLKAVDGF</sequence>
<keyword id="KW-0067">ATP-binding</keyword>
<keyword id="KW-0963">Cytoplasm</keyword>
<keyword id="KW-0227">DNA damage</keyword>
<keyword id="KW-0233">DNA recombination</keyword>
<keyword id="KW-0234">DNA repair</keyword>
<keyword id="KW-0238">DNA-binding</keyword>
<keyword id="KW-0547">Nucleotide-binding</keyword>
<keyword id="KW-1185">Reference proteome</keyword>
<keyword id="KW-0742">SOS response</keyword>
<proteinExistence type="inferred from homology"/>
<reference key="1">
    <citation type="journal article" date="2013" name="Stand. Genomic Sci.">
        <title>Complete genome sequence of Arthrobacter sp. strain FB24.</title>
        <authorList>
            <person name="Nakatsu C.H."/>
            <person name="Barabote R."/>
            <person name="Thompson S."/>
            <person name="Bruce D."/>
            <person name="Detter C."/>
            <person name="Brettin T."/>
            <person name="Han C."/>
            <person name="Beasley F."/>
            <person name="Chen W."/>
            <person name="Konopka A."/>
            <person name="Xie G."/>
        </authorList>
    </citation>
    <scope>NUCLEOTIDE SEQUENCE [LARGE SCALE GENOMIC DNA]</scope>
    <source>
        <strain>FB24</strain>
    </source>
</reference>
<name>RECA_ARTS2</name>
<organism>
    <name type="scientific">Arthrobacter sp. (strain FB24)</name>
    <dbReference type="NCBI Taxonomy" id="290399"/>
    <lineage>
        <taxon>Bacteria</taxon>
        <taxon>Bacillati</taxon>
        <taxon>Actinomycetota</taxon>
        <taxon>Actinomycetes</taxon>
        <taxon>Micrococcales</taxon>
        <taxon>Micrococcaceae</taxon>
        <taxon>Arthrobacter</taxon>
    </lineage>
</organism>
<accession>A0JUY4</accession>
<evidence type="ECO:0000255" key="1">
    <source>
        <dbReference type="HAMAP-Rule" id="MF_00268"/>
    </source>
</evidence>
<gene>
    <name evidence="1" type="primary">recA</name>
    <name type="ordered locus">Arth_1460</name>
</gene>